<evidence type="ECO:0000250" key="1"/>
<evidence type="ECO:0000255" key="2">
    <source>
        <dbReference type="PROSITE-ProRule" id="PRU00338"/>
    </source>
</evidence>
<evidence type="ECO:0000256" key="3">
    <source>
        <dbReference type="SAM" id="MobiDB-lite"/>
    </source>
</evidence>
<evidence type="ECO:0000269" key="4">
    <source>
    </source>
</evidence>
<evidence type="ECO:0000269" key="5">
    <source>
    </source>
</evidence>
<evidence type="ECO:0000305" key="6"/>
<evidence type="ECO:0007744" key="7">
    <source>
    </source>
</evidence>
<evidence type="ECO:0007829" key="8">
    <source>
        <dbReference type="PDB" id="6ACV"/>
    </source>
</evidence>
<sequence length="254" mass="27642">MGGEEEVVSVELPAPSSWKKLFYPNKVGSVKKTEVVFVAPTGEEISNRKQLEQYLKSHPGNPAIAEFDWTTSGTPRRSARISEKTKATPSPDKEPPKKRGRTKSPVSKKDAEGEKSEGGGEENSHVKDTEMNPPEGIAENENVTDKNGSGETERVNDAKENIVAEETPNAAPVQEEGESMKEKALDSVDDKSKETDKEKDTGSIEKNSVDVEKKTVEASDEKKNSEAETRNHEENGLTTEAEGKEKTAEGEATG</sequence>
<dbReference type="EMBL" id="AB017071">
    <property type="protein sequence ID" value="BAB02310.1"/>
    <property type="molecule type" value="Genomic_DNA"/>
</dbReference>
<dbReference type="EMBL" id="CP002686">
    <property type="protein sequence ID" value="AEE75727.1"/>
    <property type="molecule type" value="Genomic_DNA"/>
</dbReference>
<dbReference type="EMBL" id="CP002686">
    <property type="protein sequence ID" value="ANM64124.1"/>
    <property type="molecule type" value="Genomic_DNA"/>
</dbReference>
<dbReference type="EMBL" id="CP002686">
    <property type="protein sequence ID" value="ANM64125.1"/>
    <property type="molecule type" value="Genomic_DNA"/>
</dbReference>
<dbReference type="EMBL" id="AK227060">
    <property type="protein sequence ID" value="BAE99120.1"/>
    <property type="status" value="ALT_FRAME"/>
    <property type="molecule type" value="mRNA"/>
</dbReference>
<dbReference type="EMBL" id="BT015051">
    <property type="protein sequence ID" value="AAT71923.1"/>
    <property type="molecule type" value="mRNA"/>
</dbReference>
<dbReference type="EMBL" id="BT033124">
    <property type="protein sequence ID" value="ACF22900.1"/>
    <property type="molecule type" value="mRNA"/>
</dbReference>
<dbReference type="RefSeq" id="NP_001319562.1">
    <property type="nucleotide sequence ID" value="NM_001338188.1"/>
</dbReference>
<dbReference type="RefSeq" id="NP_001326173.1">
    <property type="nucleotide sequence ID" value="NM_001338189.1"/>
</dbReference>
<dbReference type="RefSeq" id="NP_188200.1">
    <property type="nucleotide sequence ID" value="NM_112449.6"/>
</dbReference>
<dbReference type="PDB" id="6ACV">
    <property type="method" value="NMR"/>
    <property type="chains" value="A=4-74"/>
</dbReference>
<dbReference type="PDBsum" id="6ACV"/>
<dbReference type="SMR" id="Q9LW00"/>
<dbReference type="BioGRID" id="6156">
    <property type="interactions" value="6"/>
</dbReference>
<dbReference type="FunCoup" id="Q9LW00">
    <property type="interactions" value="10"/>
</dbReference>
<dbReference type="IntAct" id="Q9LW00">
    <property type="interactions" value="4"/>
</dbReference>
<dbReference type="STRING" id="3702.Q9LW00"/>
<dbReference type="iPTMnet" id="Q9LW00"/>
<dbReference type="PaxDb" id="3702-AT3G15790.1"/>
<dbReference type="ProteomicsDB" id="238846"/>
<dbReference type="EnsemblPlants" id="AT3G15790.1">
    <property type="protein sequence ID" value="AT3G15790.1"/>
    <property type="gene ID" value="AT3G15790"/>
</dbReference>
<dbReference type="EnsemblPlants" id="AT3G15790.2">
    <property type="protein sequence ID" value="AT3G15790.2"/>
    <property type="gene ID" value="AT3G15790"/>
</dbReference>
<dbReference type="EnsemblPlants" id="AT3G15790.3">
    <property type="protein sequence ID" value="AT3G15790.3"/>
    <property type="gene ID" value="AT3G15790"/>
</dbReference>
<dbReference type="GeneID" id="820822"/>
<dbReference type="Gramene" id="AT3G15790.1">
    <property type="protein sequence ID" value="AT3G15790.1"/>
    <property type="gene ID" value="AT3G15790"/>
</dbReference>
<dbReference type="Gramene" id="AT3G15790.2">
    <property type="protein sequence ID" value="AT3G15790.2"/>
    <property type="gene ID" value="AT3G15790"/>
</dbReference>
<dbReference type="Gramene" id="AT3G15790.3">
    <property type="protein sequence ID" value="AT3G15790.3"/>
    <property type="gene ID" value="AT3G15790"/>
</dbReference>
<dbReference type="KEGG" id="ath:AT3G15790"/>
<dbReference type="Araport" id="AT3G15790"/>
<dbReference type="TAIR" id="AT3G15790">
    <property type="gene designation" value="MBD11"/>
</dbReference>
<dbReference type="eggNOG" id="ENOG502RYIM">
    <property type="taxonomic scope" value="Eukaryota"/>
</dbReference>
<dbReference type="HOGENOM" id="CLU_051759_0_1_1"/>
<dbReference type="InParanoid" id="Q9LW00"/>
<dbReference type="OMA" id="HVKDTEM"/>
<dbReference type="OrthoDB" id="1435582at2759"/>
<dbReference type="PhylomeDB" id="Q9LW00"/>
<dbReference type="PRO" id="PR:Q9LW00"/>
<dbReference type="Proteomes" id="UP000006548">
    <property type="component" value="Chromosome 3"/>
</dbReference>
<dbReference type="ExpressionAtlas" id="Q9LW00">
    <property type="expression patterns" value="baseline and differential"/>
</dbReference>
<dbReference type="GO" id="GO:0005634">
    <property type="term" value="C:nucleus"/>
    <property type="evidence" value="ECO:0000314"/>
    <property type="project" value="UniProtKB"/>
</dbReference>
<dbReference type="GO" id="GO:0008327">
    <property type="term" value="F:methyl-CpG binding"/>
    <property type="evidence" value="ECO:0000250"/>
    <property type="project" value="TAIR"/>
</dbReference>
<dbReference type="Gene3D" id="3.30.890.10">
    <property type="entry name" value="Methyl-cpg-binding Protein 2, Chain A"/>
    <property type="match status" value="1"/>
</dbReference>
<dbReference type="InterPro" id="IPR016177">
    <property type="entry name" value="DNA-bd_dom_sf"/>
</dbReference>
<dbReference type="InterPro" id="IPR039622">
    <property type="entry name" value="MBD10/11"/>
</dbReference>
<dbReference type="InterPro" id="IPR001739">
    <property type="entry name" value="Methyl_CpG_DNA-bd"/>
</dbReference>
<dbReference type="PANTHER" id="PTHR33729">
    <property type="entry name" value="METHYL-CPG BINDING DOMAIN CONTAINING PROTEIN, EXPRESSED"/>
    <property type="match status" value="1"/>
</dbReference>
<dbReference type="PANTHER" id="PTHR33729:SF6">
    <property type="entry name" value="METHYL-CPG-BINDING DOMAIN-CONTAINING PROTEIN 11"/>
    <property type="match status" value="1"/>
</dbReference>
<dbReference type="Pfam" id="PF01429">
    <property type="entry name" value="MBD"/>
    <property type="match status" value="1"/>
</dbReference>
<dbReference type="SUPFAM" id="SSF54171">
    <property type="entry name" value="DNA-binding domain"/>
    <property type="match status" value="1"/>
</dbReference>
<dbReference type="PROSITE" id="PS50982">
    <property type="entry name" value="MBD"/>
    <property type="match status" value="1"/>
</dbReference>
<feature type="chain" id="PRO_0000405287" description="Methyl-CpG-binding domain-containing protein 11">
    <location>
        <begin position="1"/>
        <end position="254"/>
    </location>
</feature>
<feature type="domain" description="MBD" evidence="2">
    <location>
        <begin position="4"/>
        <end position="74"/>
    </location>
</feature>
<feature type="region of interest" description="Disordered" evidence="3">
    <location>
        <begin position="56"/>
        <end position="254"/>
    </location>
</feature>
<feature type="compositionally biased region" description="Basic and acidic residues" evidence="3">
    <location>
        <begin position="80"/>
        <end position="97"/>
    </location>
</feature>
<feature type="compositionally biased region" description="Basic and acidic residues" evidence="3">
    <location>
        <begin position="107"/>
        <end position="130"/>
    </location>
</feature>
<feature type="compositionally biased region" description="Basic and acidic residues" evidence="3">
    <location>
        <begin position="151"/>
        <end position="162"/>
    </location>
</feature>
<feature type="compositionally biased region" description="Basic and acidic residues" evidence="3">
    <location>
        <begin position="178"/>
        <end position="254"/>
    </location>
</feature>
<feature type="modified residue" description="Phosphoserine" evidence="7">
    <location>
        <position position="116"/>
    </location>
</feature>
<feature type="strand" evidence="8">
    <location>
        <begin position="18"/>
        <end position="22"/>
    </location>
</feature>
<feature type="strand" evidence="8">
    <location>
        <begin position="26"/>
        <end position="31"/>
    </location>
</feature>
<feature type="strand" evidence="8">
    <location>
        <begin position="35"/>
        <end position="38"/>
    </location>
</feature>
<feature type="strand" evidence="8">
    <location>
        <begin position="45"/>
        <end position="47"/>
    </location>
</feature>
<feature type="helix" evidence="8">
    <location>
        <begin position="48"/>
        <end position="57"/>
    </location>
</feature>
<feature type="helix" evidence="8">
    <location>
        <begin position="64"/>
        <end position="66"/>
    </location>
</feature>
<reference key="1">
    <citation type="journal article" date="2000" name="DNA Res.">
        <title>Structural analysis of Arabidopsis thaliana chromosome 3. I. Sequence features of the regions of 4,504,864 bp covered by sixty P1 and TAC clones.</title>
        <authorList>
            <person name="Sato S."/>
            <person name="Nakamura Y."/>
            <person name="Kaneko T."/>
            <person name="Katoh T."/>
            <person name="Asamizu E."/>
            <person name="Tabata S."/>
        </authorList>
    </citation>
    <scope>NUCLEOTIDE SEQUENCE [LARGE SCALE GENOMIC DNA]</scope>
    <source>
        <strain>cv. Columbia</strain>
    </source>
</reference>
<reference key="2">
    <citation type="journal article" date="2017" name="Plant J.">
        <title>Araport11: a complete reannotation of the Arabidopsis thaliana reference genome.</title>
        <authorList>
            <person name="Cheng C.Y."/>
            <person name="Krishnakumar V."/>
            <person name="Chan A.P."/>
            <person name="Thibaud-Nissen F."/>
            <person name="Schobel S."/>
            <person name="Town C.D."/>
        </authorList>
    </citation>
    <scope>GENOME REANNOTATION</scope>
    <source>
        <strain>cv. Columbia</strain>
    </source>
</reference>
<reference key="3">
    <citation type="submission" date="2006-07" db="EMBL/GenBank/DDBJ databases">
        <title>Large-scale analysis of RIKEN Arabidopsis full-length (RAFL) cDNAs.</title>
        <authorList>
            <person name="Totoki Y."/>
            <person name="Seki M."/>
            <person name="Ishida J."/>
            <person name="Nakajima M."/>
            <person name="Enju A."/>
            <person name="Kamiya A."/>
            <person name="Narusaka M."/>
            <person name="Shin-i T."/>
            <person name="Nakagawa M."/>
            <person name="Sakamoto N."/>
            <person name="Oishi K."/>
            <person name="Kohara Y."/>
            <person name="Kobayashi M."/>
            <person name="Toyoda A."/>
            <person name="Sakaki Y."/>
            <person name="Sakurai T."/>
            <person name="Iida K."/>
            <person name="Akiyama K."/>
            <person name="Satou M."/>
            <person name="Toyoda T."/>
            <person name="Konagaya A."/>
            <person name="Carninci P."/>
            <person name="Kawai J."/>
            <person name="Hayashizaki Y."/>
            <person name="Shinozaki K."/>
        </authorList>
    </citation>
    <scope>NUCLEOTIDE SEQUENCE [LARGE SCALE MRNA]</scope>
    <source>
        <strain>cv. Columbia</strain>
    </source>
</reference>
<reference key="4">
    <citation type="submission" date="2008-07" db="EMBL/GenBank/DDBJ databases">
        <title>Arabidopsis ORF clones.</title>
        <authorList>
            <person name="de los Reyes C."/>
            <person name="Quan R."/>
            <person name="Chen H."/>
            <person name="Bautista V."/>
            <person name="Kim C.J."/>
            <person name="Ecker J.R."/>
        </authorList>
    </citation>
    <scope>NUCLEOTIDE SEQUENCE [LARGE SCALE MRNA]</scope>
</reference>
<reference key="5">
    <citation type="journal article" date="2003" name="Nucleic Acids Res.">
        <title>Ten members of the Arabidopsis gene family encoding methyl-CpG-binding domain proteins are transcriptionally active and at least one, AtMBD11, is crucial for normal development.</title>
        <authorList>
            <person name="Berg A."/>
            <person name="Meza T.J."/>
            <person name="Mahic M."/>
            <person name="Thorstensen T."/>
            <person name="Kristiansen K."/>
            <person name="Aalen R.B."/>
        </authorList>
    </citation>
    <scope>FUNCTION</scope>
    <scope>DISRUPTION PHENOTYPE</scope>
    <scope>TISSUE SPECIFICITY</scope>
    <scope>SUBCELLULAR LOCATION</scope>
    <scope>GENE FAMILY</scope>
    <scope>NOMENCLATURE</scope>
</reference>
<reference key="6">
    <citation type="journal article" date="2003" name="Plant Mol. Biol.">
        <title>Arabidopsis MBD proteins show different binding specificities and nuclear localization.</title>
        <authorList>
            <person name="Scebba F."/>
            <person name="Bernacchia G."/>
            <person name="De Bastiani M."/>
            <person name="Evangelista M."/>
            <person name="Cantoni R.M."/>
            <person name="Cella R."/>
            <person name="Locci M.T."/>
            <person name="Pitto L."/>
        </authorList>
    </citation>
    <scope>FUNCTION</scope>
    <scope>TISSUE SPECIFICITY</scope>
    <scope>SUBCELLULAR LOCATION</scope>
    <source>
        <strain>cv. Columbia</strain>
    </source>
</reference>
<reference key="7">
    <citation type="journal article" date="2005" name="Plant Physiol.">
        <title>Evolutionary divergence of monocot and dicot methyl-CpG-binding domain proteins.</title>
        <authorList>
            <person name="Springer N.M."/>
            <person name="Kaeppler S.M."/>
        </authorList>
    </citation>
    <scope>GENE FAMILY</scope>
</reference>
<reference key="8">
    <citation type="journal article" date="2007" name="Trends Plant Sci.">
        <title>Methyl-CpG-binding domain proteins in plants: interpreters of DNA methylation.</title>
        <authorList>
            <person name="Zemach A."/>
            <person name="Grafi G."/>
        </authorList>
    </citation>
    <scope>REVIEW</scope>
</reference>
<reference key="9">
    <citation type="journal article" date="2009" name="Plant Physiol.">
        <title>Large-scale Arabidopsis phosphoproteome profiling reveals novel chloroplast kinase substrates and phosphorylation networks.</title>
        <authorList>
            <person name="Reiland S."/>
            <person name="Messerli G."/>
            <person name="Baerenfaller K."/>
            <person name="Gerrits B."/>
            <person name="Endler A."/>
            <person name="Grossmann J."/>
            <person name="Gruissem W."/>
            <person name="Baginsky S."/>
        </authorList>
    </citation>
    <scope>PHOSPHORYLATION [LARGE SCALE ANALYSIS] AT SER-116</scope>
    <scope>IDENTIFICATION BY MASS SPECTROMETRY [LARGE SCALE ANALYSIS]</scope>
</reference>
<organism>
    <name type="scientific">Arabidopsis thaliana</name>
    <name type="common">Mouse-ear cress</name>
    <dbReference type="NCBI Taxonomy" id="3702"/>
    <lineage>
        <taxon>Eukaryota</taxon>
        <taxon>Viridiplantae</taxon>
        <taxon>Streptophyta</taxon>
        <taxon>Embryophyta</taxon>
        <taxon>Tracheophyta</taxon>
        <taxon>Spermatophyta</taxon>
        <taxon>Magnoliopsida</taxon>
        <taxon>eudicotyledons</taxon>
        <taxon>Gunneridae</taxon>
        <taxon>Pentapetalae</taxon>
        <taxon>rosids</taxon>
        <taxon>malvids</taxon>
        <taxon>Brassicales</taxon>
        <taxon>Brassicaceae</taxon>
        <taxon>Camelineae</taxon>
        <taxon>Arabidopsis</taxon>
    </lineage>
</organism>
<keyword id="KW-0002">3D-structure</keyword>
<keyword id="KW-0238">DNA-binding</keyword>
<keyword id="KW-0539">Nucleus</keyword>
<keyword id="KW-0597">Phosphoprotein</keyword>
<keyword id="KW-1185">Reference proteome</keyword>
<keyword id="KW-0804">Transcription</keyword>
<keyword id="KW-0805">Transcription regulation</keyword>
<comment type="function">
    <text evidence="4 5">Transcriptional regulator that binds DNA independently of its methylation status. Required during plant organogenesis and development.</text>
</comment>
<comment type="subcellular location">
    <subcellularLocation>
        <location evidence="4 5">Nucleus</location>
    </subcellularLocation>
</comment>
<comment type="tissue specificity">
    <text evidence="4 5">Expressed in leaves (around hydathodes), buds, flowers (carpels and pollen grains), stems (around nodes), siliques, mature seeds and roots.</text>
</comment>
<comment type="domain">
    <text evidence="1">The methyl-CpG-binding domain (MBD) functions both in binding to methylated DNA and in protein interactions.</text>
</comment>
<comment type="disruption phenotype">
    <text evidence="4">Variety of phenotypic effects, including aerial rosettes, serrated leaves, abnormal position of flowers, fertility problems and late flowering.</text>
</comment>
<comment type="sequence caution" evidence="6">
    <conflict type="frameshift">
        <sequence resource="EMBL-CDS" id="BAE99120"/>
    </conflict>
</comment>
<name>MBD11_ARATH</name>
<protein>
    <recommendedName>
        <fullName>Methyl-CpG-binding domain-containing protein 11</fullName>
        <shortName>AtMBD11</shortName>
        <shortName>MBD11</shortName>
    </recommendedName>
    <alternativeName>
        <fullName>Methyl-CpG-binding protein MBD11</fullName>
    </alternativeName>
</protein>
<gene>
    <name type="primary">MBD11</name>
    <name type="ordered locus">At3g15790</name>
    <name type="ORF">MSJ11.19</name>
</gene>
<accession>Q9LW00</accession>
<accession>Q0WUS8</accession>
<proteinExistence type="evidence at protein level"/>